<evidence type="ECO:0000255" key="1">
    <source>
        <dbReference type="PROSITE-ProRule" id="PRU00042"/>
    </source>
</evidence>
<evidence type="ECO:0000255" key="2">
    <source>
        <dbReference type="PROSITE-ProRule" id="PRU00119"/>
    </source>
</evidence>
<evidence type="ECO:0000256" key="3">
    <source>
        <dbReference type="SAM" id="MobiDB-lite"/>
    </source>
</evidence>
<evidence type="ECO:0000305" key="4"/>
<organism>
    <name type="scientific">Bos taurus</name>
    <name type="common">Bovine</name>
    <dbReference type="NCBI Taxonomy" id="9913"/>
    <lineage>
        <taxon>Eukaryota</taxon>
        <taxon>Metazoa</taxon>
        <taxon>Chordata</taxon>
        <taxon>Craniata</taxon>
        <taxon>Vertebrata</taxon>
        <taxon>Euteleostomi</taxon>
        <taxon>Mammalia</taxon>
        <taxon>Eutheria</taxon>
        <taxon>Laurasiatheria</taxon>
        <taxon>Artiodactyla</taxon>
        <taxon>Ruminantia</taxon>
        <taxon>Pecora</taxon>
        <taxon>Bovidae</taxon>
        <taxon>Bovinae</taxon>
        <taxon>Bos</taxon>
    </lineage>
</organism>
<reference key="1">
    <citation type="submission" date="2007-02" db="EMBL/GenBank/DDBJ databases">
        <authorList>
            <consortium name="NIH - Mammalian Gene Collection (MGC) project"/>
        </authorList>
    </citation>
    <scope>NUCLEOTIDE SEQUENCE [LARGE SCALE MRNA]</scope>
    <source>
        <strain>Hereford</strain>
        <tissue>Uterus</tissue>
    </source>
</reference>
<gene>
    <name type="primary">ZNF34</name>
</gene>
<name>ZNF34_BOVIN</name>
<feature type="chain" id="PRO_0000310415" description="Zinc finger protein 34">
    <location>
        <begin position="1"/>
        <end position="543"/>
    </location>
</feature>
<feature type="domain" description="KRAB" evidence="2">
    <location>
        <begin position="14"/>
        <end position="87"/>
    </location>
</feature>
<feature type="zinc finger region" description="C2H2-type 1" evidence="1">
    <location>
        <begin position="179"/>
        <end position="201"/>
    </location>
</feature>
<feature type="zinc finger region" description="C2H2-type 2" evidence="1">
    <location>
        <begin position="234"/>
        <end position="256"/>
    </location>
</feature>
<feature type="zinc finger region" description="C2H2-type 3" evidence="1">
    <location>
        <begin position="262"/>
        <end position="284"/>
    </location>
</feature>
<feature type="zinc finger region" description="C2H2-type 4" evidence="1">
    <location>
        <begin position="290"/>
        <end position="312"/>
    </location>
</feature>
<feature type="zinc finger region" description="C2H2-type 5" evidence="1">
    <location>
        <begin position="318"/>
        <end position="340"/>
    </location>
</feature>
<feature type="zinc finger region" description="C2H2-type 6" evidence="1">
    <location>
        <begin position="346"/>
        <end position="368"/>
    </location>
</feature>
<feature type="zinc finger region" description="C2H2-type 7" evidence="1">
    <location>
        <begin position="374"/>
        <end position="396"/>
    </location>
</feature>
<feature type="zinc finger region" description="C2H2-type 8" evidence="1">
    <location>
        <begin position="402"/>
        <end position="424"/>
    </location>
</feature>
<feature type="zinc finger region" description="C2H2-type 9" evidence="1">
    <location>
        <begin position="430"/>
        <end position="452"/>
    </location>
</feature>
<feature type="zinc finger region" description="C2H2-type 10" evidence="1">
    <location>
        <begin position="458"/>
        <end position="480"/>
    </location>
</feature>
<feature type="zinc finger region" description="C2H2-type 11" evidence="1">
    <location>
        <begin position="486"/>
        <end position="508"/>
    </location>
</feature>
<feature type="zinc finger region" description="C2H2-type 12" evidence="1">
    <location>
        <begin position="514"/>
        <end position="536"/>
    </location>
</feature>
<feature type="region of interest" description="Disordered" evidence="3">
    <location>
        <begin position="84"/>
        <end position="151"/>
    </location>
</feature>
<feature type="compositionally biased region" description="Basic and acidic residues" evidence="3">
    <location>
        <begin position="124"/>
        <end position="147"/>
    </location>
</feature>
<protein>
    <recommendedName>
        <fullName>Zinc finger protein 34</fullName>
    </recommendedName>
</protein>
<keyword id="KW-0238">DNA-binding</keyword>
<keyword id="KW-0479">Metal-binding</keyword>
<keyword id="KW-0539">Nucleus</keyword>
<keyword id="KW-1185">Reference proteome</keyword>
<keyword id="KW-0677">Repeat</keyword>
<keyword id="KW-0804">Transcription</keyword>
<keyword id="KW-0805">Transcription regulation</keyword>
<keyword id="KW-0862">Zinc</keyword>
<keyword id="KW-0863">Zinc-finger</keyword>
<accession>A3KN32</accession>
<sequence length="543" mass="61997">MAALDLCALPQAEVTFEDVAVFLSQEEWGLLGPAQKGLYREVMLETYRNLVSLGAGLAGPKPEVIAQLEQGDELWVLDMHGAEQPSVDGSAHGTRTENQEVTSGEMLFGRELDPLRGSVLRGPEPGEVHERVREPEGRLDRPGEQRGPRLVTLANEECGLESGGNLRSRSRPVPDQRPHKCDICEQSFEQRSYLNNHKRVHRCKKTNIVHDSGEIFAANLVKEDQKIPVGKRLYYCGCCGKAFRYSANLVKHQRLHSEEKPYKCEECGKAFHQSCELISHRRMHSGEIPYRCDECGKTFNQRPNLMKHQRIHTGEKPYKCSECGKHFSAYSSLIYHQRIHTGEKPYKCSDCGKAFSDGSILIRHRRTHTGEKPYECKECGKGFTQSSNLIQHQRIHTGEKPYKCNECEKAFIQKTKLVEHQRSHTGEKPYECNDCGKVFSQSTHLIQHQRIHTGEKPYKCSECGKAFHNSSRLIHHQRSHHGEKPYKCADCKKAFSQGTYLLQHRRIHTGEKPYTCGECGKAFRHSSNMSQHQRIHLREDFSL</sequence>
<dbReference type="EMBL" id="BC133534">
    <property type="protein sequence ID" value="AAI33535.1"/>
    <property type="molecule type" value="mRNA"/>
</dbReference>
<dbReference type="RefSeq" id="NP_001076989.1">
    <property type="nucleotide sequence ID" value="NM_001083520.1"/>
</dbReference>
<dbReference type="RefSeq" id="XP_015329850.2">
    <property type="nucleotide sequence ID" value="XM_015474364.3"/>
</dbReference>
<dbReference type="RefSeq" id="XP_024857511.1">
    <property type="nucleotide sequence ID" value="XM_025001743.2"/>
</dbReference>
<dbReference type="RefSeq" id="XP_059730245.1">
    <property type="nucleotide sequence ID" value="XM_059874262.1"/>
</dbReference>
<dbReference type="RefSeq" id="XP_059730246.1">
    <property type="nucleotide sequence ID" value="XM_059874263.1"/>
</dbReference>
<dbReference type="RefSeq" id="XP_059730247.1">
    <property type="nucleotide sequence ID" value="XM_059874264.1"/>
</dbReference>
<dbReference type="RefSeq" id="XP_059730248.1">
    <property type="nucleotide sequence ID" value="XM_059874265.1"/>
</dbReference>
<dbReference type="RefSeq" id="XP_059730249.1">
    <property type="nucleotide sequence ID" value="XM_059874266.1"/>
</dbReference>
<dbReference type="RefSeq" id="XP_059730250.1">
    <property type="nucleotide sequence ID" value="XM_059874267.1"/>
</dbReference>
<dbReference type="RefSeq" id="XP_059730251.1">
    <property type="nucleotide sequence ID" value="XM_059874268.1"/>
</dbReference>
<dbReference type="RefSeq" id="XP_059730252.1">
    <property type="nucleotide sequence ID" value="XM_059874269.1"/>
</dbReference>
<dbReference type="RefSeq" id="XP_059730253.1">
    <property type="nucleotide sequence ID" value="XM_059874270.1"/>
</dbReference>
<dbReference type="SMR" id="A3KN32"/>
<dbReference type="FunCoup" id="A3KN32">
    <property type="interactions" value="142"/>
</dbReference>
<dbReference type="STRING" id="9913.ENSBTAP00000016390"/>
<dbReference type="PaxDb" id="9913-ENSBTAP00000046669"/>
<dbReference type="Ensembl" id="ENSBTAT00000016390.7">
    <property type="protein sequence ID" value="ENSBTAP00000016390.6"/>
    <property type="gene ID" value="ENSBTAG00000012353.7"/>
</dbReference>
<dbReference type="GeneID" id="615905"/>
<dbReference type="KEGG" id="bta:615905"/>
<dbReference type="CTD" id="80778"/>
<dbReference type="VEuPathDB" id="HostDB:ENSBTAG00000012353"/>
<dbReference type="VGNC" id="VGNC:37252">
    <property type="gene designation" value="ZNF34"/>
</dbReference>
<dbReference type="eggNOG" id="KOG1721">
    <property type="taxonomic scope" value="Eukaryota"/>
</dbReference>
<dbReference type="GeneTree" id="ENSGT00940000153104"/>
<dbReference type="InParanoid" id="A3KN32"/>
<dbReference type="OMA" id="NVFQHQR"/>
<dbReference type="OrthoDB" id="9437857at2759"/>
<dbReference type="Proteomes" id="UP000009136">
    <property type="component" value="Chromosome 14"/>
</dbReference>
<dbReference type="Bgee" id="ENSBTAG00000012353">
    <property type="expression patterns" value="Expressed in retina and 105 other cell types or tissues"/>
</dbReference>
<dbReference type="GO" id="GO:0005634">
    <property type="term" value="C:nucleus"/>
    <property type="evidence" value="ECO:0007669"/>
    <property type="project" value="UniProtKB-SubCell"/>
</dbReference>
<dbReference type="GO" id="GO:0000981">
    <property type="term" value="F:DNA-binding transcription factor activity, RNA polymerase II-specific"/>
    <property type="evidence" value="ECO:0000318"/>
    <property type="project" value="GO_Central"/>
</dbReference>
<dbReference type="GO" id="GO:0000978">
    <property type="term" value="F:RNA polymerase II cis-regulatory region sequence-specific DNA binding"/>
    <property type="evidence" value="ECO:0000318"/>
    <property type="project" value="GO_Central"/>
</dbReference>
<dbReference type="GO" id="GO:0008270">
    <property type="term" value="F:zinc ion binding"/>
    <property type="evidence" value="ECO:0007669"/>
    <property type="project" value="UniProtKB-KW"/>
</dbReference>
<dbReference type="GO" id="GO:0006357">
    <property type="term" value="P:regulation of transcription by RNA polymerase II"/>
    <property type="evidence" value="ECO:0000318"/>
    <property type="project" value="GO_Central"/>
</dbReference>
<dbReference type="CDD" id="cd07765">
    <property type="entry name" value="KRAB_A-box"/>
    <property type="match status" value="1"/>
</dbReference>
<dbReference type="FunFam" id="3.30.160.60:FF:000688">
    <property type="entry name" value="zinc finger protein 197 isoform X1"/>
    <property type="match status" value="1"/>
</dbReference>
<dbReference type="FunFam" id="3.30.160.60:FF:002343">
    <property type="entry name" value="Zinc finger protein 33A"/>
    <property type="match status" value="2"/>
</dbReference>
<dbReference type="FunFam" id="3.30.160.60:FF:001025">
    <property type="entry name" value="zinc finger protein 34"/>
    <property type="match status" value="1"/>
</dbReference>
<dbReference type="FunFam" id="3.30.160.60:FF:001392">
    <property type="entry name" value="zinc finger protein 34 isoform X2"/>
    <property type="match status" value="1"/>
</dbReference>
<dbReference type="FunFam" id="3.30.160.60:FF:002214">
    <property type="entry name" value="zinc finger protein 34 isoform X2"/>
    <property type="match status" value="1"/>
</dbReference>
<dbReference type="FunFam" id="3.30.160.60:FF:000016">
    <property type="entry name" value="zinc finger protein 37 homolog"/>
    <property type="match status" value="1"/>
</dbReference>
<dbReference type="FunFam" id="3.30.160.60:FF:000281">
    <property type="entry name" value="Zinc finger protein 558 isoform X1"/>
    <property type="match status" value="1"/>
</dbReference>
<dbReference type="FunFam" id="3.30.160.60:FF:000737">
    <property type="entry name" value="Zinc finger protein 565"/>
    <property type="match status" value="1"/>
</dbReference>
<dbReference type="FunFam" id="3.30.160.60:FF:000011">
    <property type="entry name" value="zinc finger protein 615 isoform X1"/>
    <property type="match status" value="1"/>
</dbReference>
<dbReference type="FunFam" id="3.30.160.60:FF:000642">
    <property type="entry name" value="Zinc finger with KRAB and SCAN domains 2"/>
    <property type="match status" value="1"/>
</dbReference>
<dbReference type="FunFam" id="3.30.160.60:FF:000427">
    <property type="entry name" value="Zinc finger with KRAB and SCAN domains 7"/>
    <property type="match status" value="1"/>
</dbReference>
<dbReference type="Gene3D" id="6.10.140.140">
    <property type="match status" value="1"/>
</dbReference>
<dbReference type="Gene3D" id="3.30.160.60">
    <property type="entry name" value="Classic Zinc Finger"/>
    <property type="match status" value="12"/>
</dbReference>
<dbReference type="InterPro" id="IPR050752">
    <property type="entry name" value="C2H2-ZF_domain"/>
</dbReference>
<dbReference type="InterPro" id="IPR001909">
    <property type="entry name" value="KRAB"/>
</dbReference>
<dbReference type="InterPro" id="IPR036051">
    <property type="entry name" value="KRAB_dom_sf"/>
</dbReference>
<dbReference type="InterPro" id="IPR036236">
    <property type="entry name" value="Znf_C2H2_sf"/>
</dbReference>
<dbReference type="InterPro" id="IPR013087">
    <property type="entry name" value="Znf_C2H2_type"/>
</dbReference>
<dbReference type="PANTHER" id="PTHR24384">
    <property type="entry name" value="FINGER PUTATIVE TRANSCRIPTION FACTOR FAMILY-RELATED"/>
    <property type="match status" value="1"/>
</dbReference>
<dbReference type="PANTHER" id="PTHR24384:SF242">
    <property type="entry name" value="ZINC FINGER PROTEIN 628"/>
    <property type="match status" value="1"/>
</dbReference>
<dbReference type="Pfam" id="PF01352">
    <property type="entry name" value="KRAB"/>
    <property type="match status" value="1"/>
</dbReference>
<dbReference type="Pfam" id="PF00096">
    <property type="entry name" value="zf-C2H2"/>
    <property type="match status" value="12"/>
</dbReference>
<dbReference type="SMART" id="SM00349">
    <property type="entry name" value="KRAB"/>
    <property type="match status" value="1"/>
</dbReference>
<dbReference type="SMART" id="SM00355">
    <property type="entry name" value="ZnF_C2H2"/>
    <property type="match status" value="12"/>
</dbReference>
<dbReference type="SUPFAM" id="SSF57667">
    <property type="entry name" value="beta-beta-alpha zinc fingers"/>
    <property type="match status" value="7"/>
</dbReference>
<dbReference type="SUPFAM" id="SSF109640">
    <property type="entry name" value="KRAB domain (Kruppel-associated box)"/>
    <property type="match status" value="1"/>
</dbReference>
<dbReference type="PROSITE" id="PS50805">
    <property type="entry name" value="KRAB"/>
    <property type="match status" value="1"/>
</dbReference>
<dbReference type="PROSITE" id="PS00028">
    <property type="entry name" value="ZINC_FINGER_C2H2_1"/>
    <property type="match status" value="12"/>
</dbReference>
<dbReference type="PROSITE" id="PS50157">
    <property type="entry name" value="ZINC_FINGER_C2H2_2"/>
    <property type="match status" value="12"/>
</dbReference>
<comment type="function">
    <text>May be involved in transcriptional regulation.</text>
</comment>
<comment type="subcellular location">
    <subcellularLocation>
        <location evidence="4">Nucleus</location>
    </subcellularLocation>
</comment>
<comment type="similarity">
    <text evidence="4">Belongs to the krueppel C2H2-type zinc-finger protein family.</text>
</comment>
<proteinExistence type="evidence at transcript level"/>